<keyword id="KW-0202">Cytokine</keyword>
<keyword id="KW-0339">Growth factor</keyword>
<keyword id="KW-1185">Reference proteome</keyword>
<keyword id="KW-0964">Secreted</keyword>
<keyword id="KW-0732">Signal</keyword>
<protein>
    <recommendedName>
        <fullName evidence="4">Interleukin-11</fullName>
        <shortName>IL-11</shortName>
    </recommendedName>
</protein>
<proteinExistence type="evidence at transcript level"/>
<gene>
    <name evidence="5" type="primary">Il11</name>
</gene>
<comment type="function">
    <text evidence="1 2">Cytokine that stimulates the proliferation of hematopoietic stem cells and megakaryocyte progenitor cells and induces megakaryocyte maturation resulting in increased platelet production. Also promotes the proliferation of hepatocytes in response to liver damage. Binding to its receptor formed by IL6ST and IL11RA activates a signaling cascade that promotes cell proliferation. Signaling leads to the activation of intracellular protein kinases and the phosphorylation of STAT3. The interaction with the membrane-bound IL11RA and IL6ST stimulates 'classic signaling', whereas the binding of IL11 and soluble IL11RA to IL6ST stimulates 'trans-signaling'.</text>
</comment>
<comment type="subunit">
    <text evidence="1">Interacts with IL11RA to associate with IL6ST, giving rise to a multimeric signaling complex.</text>
</comment>
<comment type="subcellular location">
    <subcellularLocation>
        <location evidence="2">Secreted</location>
    </subcellularLocation>
</comment>
<comment type="similarity">
    <text evidence="4">Belongs to the IL-6 superfamily.</text>
</comment>
<organism>
    <name type="scientific">Rattus norvegicus</name>
    <name type="common">Rat</name>
    <dbReference type="NCBI Taxonomy" id="10116"/>
    <lineage>
        <taxon>Eukaryota</taxon>
        <taxon>Metazoa</taxon>
        <taxon>Chordata</taxon>
        <taxon>Craniata</taxon>
        <taxon>Vertebrata</taxon>
        <taxon>Euteleostomi</taxon>
        <taxon>Mammalia</taxon>
        <taxon>Eutheria</taxon>
        <taxon>Euarchontoglires</taxon>
        <taxon>Glires</taxon>
        <taxon>Rodentia</taxon>
        <taxon>Myomorpha</taxon>
        <taxon>Muroidea</taxon>
        <taxon>Muridae</taxon>
        <taxon>Murinae</taxon>
        <taxon>Rattus</taxon>
    </lineage>
</organism>
<name>IL11_RAT</name>
<evidence type="ECO:0000250" key="1">
    <source>
        <dbReference type="UniProtKB" id="P20809"/>
    </source>
</evidence>
<evidence type="ECO:0000250" key="2">
    <source>
        <dbReference type="UniProtKB" id="P47873"/>
    </source>
</evidence>
<evidence type="ECO:0000255" key="3"/>
<evidence type="ECO:0000305" key="4"/>
<evidence type="ECO:0000312" key="5">
    <source>
        <dbReference type="RGD" id="621475"/>
    </source>
</evidence>
<accession>Q99MF5</accession>
<dbReference type="EMBL" id="AF347935">
    <property type="protein sequence ID" value="AAK29623.1"/>
    <property type="molecule type" value="mRNA"/>
</dbReference>
<dbReference type="SMR" id="Q99MF5"/>
<dbReference type="FunCoup" id="Q99MF5">
    <property type="interactions" value="2"/>
</dbReference>
<dbReference type="STRING" id="10116.ENSRNOP00000023489"/>
<dbReference type="PhosphoSitePlus" id="Q99MF5"/>
<dbReference type="PaxDb" id="10116-ENSRNOP00000023489"/>
<dbReference type="UCSC" id="RGD:621475">
    <property type="organism name" value="rat"/>
</dbReference>
<dbReference type="AGR" id="RGD:621475"/>
<dbReference type="RGD" id="621475">
    <property type="gene designation" value="Il11"/>
</dbReference>
<dbReference type="eggNOG" id="ENOG502RZVA">
    <property type="taxonomic scope" value="Eukaryota"/>
</dbReference>
<dbReference type="InParanoid" id="Q99MF5"/>
<dbReference type="PhylomeDB" id="Q99MF5"/>
<dbReference type="Reactome" id="R-RNO-6788467">
    <property type="pathway name" value="IL-6-type cytokine receptor ligand interactions"/>
</dbReference>
<dbReference type="PRO" id="PR:Q99MF5"/>
<dbReference type="Proteomes" id="UP000002494">
    <property type="component" value="Unplaced"/>
</dbReference>
<dbReference type="GO" id="GO:0005737">
    <property type="term" value="C:cytoplasm"/>
    <property type="evidence" value="ECO:0000266"/>
    <property type="project" value="RGD"/>
</dbReference>
<dbReference type="GO" id="GO:0005615">
    <property type="term" value="C:extracellular space"/>
    <property type="evidence" value="ECO:0000266"/>
    <property type="project" value="RGD"/>
</dbReference>
<dbReference type="GO" id="GO:0005125">
    <property type="term" value="F:cytokine activity"/>
    <property type="evidence" value="ECO:0000266"/>
    <property type="project" value="RGD"/>
</dbReference>
<dbReference type="GO" id="GO:0008083">
    <property type="term" value="F:growth factor activity"/>
    <property type="evidence" value="ECO:0000266"/>
    <property type="project" value="RGD"/>
</dbReference>
<dbReference type="GO" id="GO:0005142">
    <property type="term" value="F:interleukin-11 receptor binding"/>
    <property type="evidence" value="ECO:0000266"/>
    <property type="project" value="RGD"/>
</dbReference>
<dbReference type="GO" id="GO:0008283">
    <property type="term" value="P:cell population proliferation"/>
    <property type="evidence" value="ECO:0000266"/>
    <property type="project" value="RGD"/>
</dbReference>
<dbReference type="GO" id="GO:0038154">
    <property type="term" value="P:interleukin-11-mediated signaling pathway"/>
    <property type="evidence" value="ECO:0000266"/>
    <property type="project" value="RGD"/>
</dbReference>
<dbReference type="GO" id="GO:0046888">
    <property type="term" value="P:negative regulation of hormone secretion"/>
    <property type="evidence" value="ECO:0000266"/>
    <property type="project" value="RGD"/>
</dbReference>
<dbReference type="GO" id="GO:0008284">
    <property type="term" value="P:positive regulation of cell population proliferation"/>
    <property type="evidence" value="ECO:0000266"/>
    <property type="project" value="RGD"/>
</dbReference>
<dbReference type="GO" id="GO:0043410">
    <property type="term" value="P:positive regulation of MAPK cascade"/>
    <property type="evidence" value="ECO:0000266"/>
    <property type="project" value="RGD"/>
</dbReference>
<dbReference type="GO" id="GO:0045944">
    <property type="term" value="P:positive regulation of transcription by RNA polymerase II"/>
    <property type="evidence" value="ECO:0000266"/>
    <property type="project" value="RGD"/>
</dbReference>
<dbReference type="FunFam" id="1.20.1250.10:FF:000017">
    <property type="entry name" value="Interleukin 11"/>
    <property type="match status" value="1"/>
</dbReference>
<dbReference type="Gene3D" id="1.20.1250.10">
    <property type="match status" value="1"/>
</dbReference>
<dbReference type="InterPro" id="IPR009079">
    <property type="entry name" value="4_helix_cytokine-like_core"/>
</dbReference>
<dbReference type="InterPro" id="IPR020438">
    <property type="entry name" value="IL-11"/>
</dbReference>
<dbReference type="InterPro" id="IPR020412">
    <property type="entry name" value="IL-11_mml"/>
</dbReference>
<dbReference type="PANTHER" id="PTHR16922">
    <property type="entry name" value="INTERLEUKIN 11"/>
    <property type="match status" value="1"/>
</dbReference>
<dbReference type="PANTHER" id="PTHR16922:SF0">
    <property type="entry name" value="INTERLEUKIN-11"/>
    <property type="match status" value="1"/>
</dbReference>
<dbReference type="Pfam" id="PF07400">
    <property type="entry name" value="IL11"/>
    <property type="match status" value="1"/>
</dbReference>
<dbReference type="PRINTS" id="PR01943">
    <property type="entry name" value="INTLKN11MAML"/>
</dbReference>
<dbReference type="PRINTS" id="PR01927">
    <property type="entry name" value="INTRLEUKIN11"/>
</dbReference>
<dbReference type="SUPFAM" id="SSF47266">
    <property type="entry name" value="4-helical cytokines"/>
    <property type="match status" value="1"/>
</dbReference>
<feature type="signal peptide" evidence="3">
    <location>
        <begin position="1"/>
        <end position="21"/>
    </location>
</feature>
<feature type="chain" id="PRO_0000015621" description="Interleukin-11">
    <location>
        <begin position="22"/>
        <end position="199"/>
    </location>
</feature>
<feature type="region of interest" description="Important for interaction with IL11RA and for the stimulation of cell proliferation" evidence="1">
    <location>
        <begin position="182"/>
        <end position="190"/>
    </location>
</feature>
<feature type="site" description="Important for interaction with IL6ST and for the stimulation of cell proliferation" evidence="2">
    <location>
        <position position="168"/>
    </location>
</feature>
<sequence>MNCVCRLVLVVLSLWPDRVVAPGPPAGSPRVSSDPRADLDSAVLLTRSLLADTRQLAAQMRDKFPADGDHNLDSLPTLAMSAGTLGSLQLPGVLTRLRVDLMSYFRHVQWLRRAAGPSLKTLEPELGALQARLERLLRRLQLLMSRLALPQAAPDQPAVPLGPPASAWGSIRAAHAILGGLHLTLDWAVRGLLLLKTRL</sequence>
<reference key="1">
    <citation type="journal article" date="2001" name="Reproduction">
        <title>Cloning of rat interleukin 11 and interleukin 11 receptor alpha chain and analysis of their expression in rat uterus in the peri-implantation period.</title>
        <authorList>
            <person name="Li R."/>
            <person name="Hartley L."/>
            <person name="Robb L."/>
        </authorList>
    </citation>
    <scope>NUCLEOTIDE SEQUENCE [MRNA]</scope>
    <source>
        <strain>Sprague-Dawley</strain>
    </source>
</reference>